<gene>
    <name type="primary">PMS1</name>
    <name type="synonym">PMSL1</name>
</gene>
<name>PMS1_HUMAN</name>
<dbReference type="EMBL" id="U13695">
    <property type="protein sequence ID" value="AAA63922.1"/>
    <property type="molecule type" value="Genomic_DNA"/>
</dbReference>
<dbReference type="EMBL" id="AB102870">
    <property type="protein sequence ID" value="BAD89399.1"/>
    <property type="molecule type" value="mRNA"/>
</dbReference>
<dbReference type="EMBL" id="AB102872">
    <property type="protein sequence ID" value="BAD89401.1"/>
    <property type="molecule type" value="mRNA"/>
</dbReference>
<dbReference type="EMBL" id="AB102875">
    <property type="protein sequence ID" value="BAD89404.1"/>
    <property type="molecule type" value="mRNA"/>
</dbReference>
<dbReference type="EMBL" id="AY267352">
    <property type="protein sequence ID" value="AAO89079.1"/>
    <property type="molecule type" value="Genomic_DNA"/>
</dbReference>
<dbReference type="EMBL" id="AC008122">
    <property type="status" value="NOT_ANNOTATED_CDS"/>
    <property type="molecule type" value="Genomic_DNA"/>
</dbReference>
<dbReference type="EMBL" id="AC013468">
    <property type="status" value="NOT_ANNOTATED_CDS"/>
    <property type="molecule type" value="Genomic_DNA"/>
</dbReference>
<dbReference type="EMBL" id="CH471058">
    <property type="protein sequence ID" value="EAX10883.1"/>
    <property type="molecule type" value="Genomic_DNA"/>
</dbReference>
<dbReference type="EMBL" id="CH471058">
    <property type="protein sequence ID" value="EAX10885.1"/>
    <property type="molecule type" value="Genomic_DNA"/>
</dbReference>
<dbReference type="EMBL" id="BC096330">
    <property type="protein sequence ID" value="AAH96330.1"/>
    <property type="molecule type" value="mRNA"/>
</dbReference>
<dbReference type="EMBL" id="BC096332">
    <property type="protein sequence ID" value="AAH96332.1"/>
    <property type="molecule type" value="mRNA"/>
</dbReference>
<dbReference type="CCDS" id="CCDS2302.1">
    <molecule id="P54277-1"/>
</dbReference>
<dbReference type="CCDS" id="CCDS46473.1">
    <molecule id="P54277-2"/>
</dbReference>
<dbReference type="CCDS" id="CCDS46474.1">
    <molecule id="P54277-3"/>
</dbReference>
<dbReference type="PIR" id="S47597">
    <property type="entry name" value="S47597"/>
</dbReference>
<dbReference type="RefSeq" id="NP_000525.1">
    <molecule id="P54277-1"/>
    <property type="nucleotide sequence ID" value="NM_000534.5"/>
</dbReference>
<dbReference type="RefSeq" id="NP_001121615.1">
    <molecule id="P54277-3"/>
    <property type="nucleotide sequence ID" value="NM_001128143.2"/>
</dbReference>
<dbReference type="RefSeq" id="NP_001121616.1">
    <molecule id="P54277-2"/>
    <property type="nucleotide sequence ID" value="NM_001128144.2"/>
</dbReference>
<dbReference type="RefSeq" id="NP_001276337.1">
    <property type="nucleotide sequence ID" value="NM_001289408.1"/>
</dbReference>
<dbReference type="RefSeq" id="NP_001307974.1">
    <molecule id="P54277-1"/>
    <property type="nucleotide sequence ID" value="NM_001321045.2"/>
</dbReference>
<dbReference type="RefSeq" id="NP_001307975.1">
    <property type="nucleotide sequence ID" value="NM_001321046.1"/>
</dbReference>
<dbReference type="RefSeq" id="NP_001307976.1">
    <molecule id="P54277-1"/>
    <property type="nucleotide sequence ID" value="NM_001321047.2"/>
</dbReference>
<dbReference type="RefSeq" id="NP_001307977.1">
    <molecule id="P54277-1"/>
    <property type="nucleotide sequence ID" value="NM_001321048.2"/>
</dbReference>
<dbReference type="RefSeq" id="XP_016859833.1">
    <molecule id="P54277-3"/>
    <property type="nucleotide sequence ID" value="XM_017004344.2"/>
</dbReference>
<dbReference type="RefSeq" id="XP_016859837.1">
    <molecule id="P54277-2"/>
    <property type="nucleotide sequence ID" value="XM_017004348.2"/>
</dbReference>
<dbReference type="RefSeq" id="XP_024308734.1">
    <molecule id="P54277-3"/>
    <property type="nucleotide sequence ID" value="XM_024452966.2"/>
</dbReference>
<dbReference type="RefSeq" id="XP_024308735.1">
    <molecule id="P54277-3"/>
    <property type="nucleotide sequence ID" value="XM_024452967.2"/>
</dbReference>
<dbReference type="RefSeq" id="XP_047300731.1">
    <molecule id="P54277-3"/>
    <property type="nucleotide sequence ID" value="XM_047444775.1"/>
</dbReference>
<dbReference type="RefSeq" id="XP_047300733.1">
    <molecule id="P54277-2"/>
    <property type="nucleotide sequence ID" value="XM_047444777.1"/>
</dbReference>
<dbReference type="RefSeq" id="XP_054198552.1">
    <molecule id="P54277-3"/>
    <property type="nucleotide sequence ID" value="XM_054342577.1"/>
</dbReference>
<dbReference type="RefSeq" id="XP_054198553.1">
    <molecule id="P54277-3"/>
    <property type="nucleotide sequence ID" value="XM_054342578.1"/>
</dbReference>
<dbReference type="RefSeq" id="XP_054198554.1">
    <molecule id="P54277-3"/>
    <property type="nucleotide sequence ID" value="XM_054342579.1"/>
</dbReference>
<dbReference type="RefSeq" id="XP_054198555.1">
    <molecule id="P54277-3"/>
    <property type="nucleotide sequence ID" value="XM_054342580.1"/>
</dbReference>
<dbReference type="RefSeq" id="XP_054198558.1">
    <molecule id="P54277-2"/>
    <property type="nucleotide sequence ID" value="XM_054342583.1"/>
</dbReference>
<dbReference type="RefSeq" id="XP_054198559.1">
    <molecule id="P54277-2"/>
    <property type="nucleotide sequence ID" value="XM_054342584.1"/>
</dbReference>
<dbReference type="PDB" id="2CS1">
    <property type="method" value="NMR"/>
    <property type="chains" value="A=571-649"/>
</dbReference>
<dbReference type="PDBsum" id="2CS1"/>
<dbReference type="SMR" id="P54277"/>
<dbReference type="BioGRID" id="111391">
    <property type="interactions" value="115"/>
</dbReference>
<dbReference type="ComplexPortal" id="CPX-9941">
    <property type="entry name" value="MutLabeta endonuclease complex"/>
</dbReference>
<dbReference type="CORUM" id="P54277"/>
<dbReference type="FunCoup" id="P54277">
    <property type="interactions" value="3274"/>
</dbReference>
<dbReference type="IntAct" id="P54277">
    <property type="interactions" value="50"/>
</dbReference>
<dbReference type="MINT" id="P54277"/>
<dbReference type="STRING" id="9606.ENSP00000406490"/>
<dbReference type="GlyGen" id="P54277">
    <property type="glycosylation" value="2 sites, 1 O-linked glycan (1 site)"/>
</dbReference>
<dbReference type="iPTMnet" id="P54277"/>
<dbReference type="MetOSite" id="P54277"/>
<dbReference type="PhosphoSitePlus" id="P54277"/>
<dbReference type="BioMuta" id="PMS1"/>
<dbReference type="DMDM" id="1709683"/>
<dbReference type="jPOST" id="P54277"/>
<dbReference type="MassIVE" id="P54277"/>
<dbReference type="PaxDb" id="9606-ENSP00000406490"/>
<dbReference type="PeptideAtlas" id="P54277"/>
<dbReference type="ProteomicsDB" id="56666">
    <molecule id="P54277-1"/>
</dbReference>
<dbReference type="ProteomicsDB" id="56667">
    <molecule id="P54277-2"/>
</dbReference>
<dbReference type="ProteomicsDB" id="56668">
    <molecule id="P54277-3"/>
</dbReference>
<dbReference type="ProteomicsDB" id="62795"/>
<dbReference type="Pumba" id="P54277"/>
<dbReference type="Antibodypedia" id="4133">
    <property type="antibodies" value="344 antibodies from 34 providers"/>
</dbReference>
<dbReference type="CPTC" id="P54277">
    <property type="antibodies" value="1 antibody"/>
</dbReference>
<dbReference type="DNASU" id="5378"/>
<dbReference type="Ensembl" id="ENST00000409593.5">
    <molecule id="P54277-4"/>
    <property type="protein sequence ID" value="ENSP00000387169.1"/>
    <property type="gene ID" value="ENSG00000064933.19"/>
</dbReference>
<dbReference type="Ensembl" id="ENST00000409823.7">
    <molecule id="P54277-3"/>
    <property type="protein sequence ID" value="ENSP00000387125.3"/>
    <property type="gene ID" value="ENSG00000064933.19"/>
</dbReference>
<dbReference type="Ensembl" id="ENST00000441310.7">
    <molecule id="P54277-1"/>
    <property type="protein sequence ID" value="ENSP00000406490.3"/>
    <property type="gene ID" value="ENSG00000064933.19"/>
</dbReference>
<dbReference type="Ensembl" id="ENST00000447232.6">
    <molecule id="P54277-2"/>
    <property type="protein sequence ID" value="ENSP00000401064.2"/>
    <property type="gene ID" value="ENSG00000064933.19"/>
</dbReference>
<dbReference type="GeneID" id="5378"/>
<dbReference type="KEGG" id="hsa:5378"/>
<dbReference type="MANE-Select" id="ENST00000441310.7">
    <property type="protein sequence ID" value="ENSP00000406490.3"/>
    <property type="RefSeq nucleotide sequence ID" value="NM_000534.5"/>
    <property type="RefSeq protein sequence ID" value="NP_000525.1"/>
</dbReference>
<dbReference type="UCSC" id="uc002urh.5">
    <molecule id="P54277-1"/>
    <property type="organism name" value="human"/>
</dbReference>
<dbReference type="AGR" id="HGNC:9121"/>
<dbReference type="CTD" id="5378"/>
<dbReference type="DisGeNET" id="5378"/>
<dbReference type="GeneCards" id="PMS1"/>
<dbReference type="HGNC" id="HGNC:9121">
    <property type="gene designation" value="PMS1"/>
</dbReference>
<dbReference type="HPA" id="ENSG00000064933">
    <property type="expression patterns" value="Tissue enhanced (testis)"/>
</dbReference>
<dbReference type="MalaCards" id="PMS1"/>
<dbReference type="MIM" id="600258">
    <property type="type" value="gene"/>
</dbReference>
<dbReference type="neXtProt" id="NX_P54277"/>
<dbReference type="OpenTargets" id="ENSG00000064933"/>
<dbReference type="Orphanet" id="144">
    <property type="disease" value="Lynch syndrome"/>
</dbReference>
<dbReference type="PharmGKB" id="PA33447"/>
<dbReference type="VEuPathDB" id="HostDB:ENSG00000064933"/>
<dbReference type="eggNOG" id="KOG1978">
    <property type="taxonomic scope" value="Eukaryota"/>
</dbReference>
<dbReference type="GeneTree" id="ENSGT00940000157085"/>
<dbReference type="HOGENOM" id="CLU_015755_0_0_1"/>
<dbReference type="InParanoid" id="P54277"/>
<dbReference type="OMA" id="HRCEDPE"/>
<dbReference type="OrthoDB" id="10263226at2759"/>
<dbReference type="PAN-GO" id="P54277">
    <property type="GO annotations" value="3 GO annotations based on evolutionary models"/>
</dbReference>
<dbReference type="PhylomeDB" id="P54277"/>
<dbReference type="TreeFam" id="TF300711"/>
<dbReference type="PathwayCommons" id="P54277"/>
<dbReference type="SignaLink" id="P54277"/>
<dbReference type="SIGNOR" id="P54277"/>
<dbReference type="BioGRID-ORCS" id="5378">
    <property type="hits" value="23 hits in 1184 CRISPR screens"/>
</dbReference>
<dbReference type="ChiTaRS" id="PMS1">
    <property type="organism name" value="human"/>
</dbReference>
<dbReference type="EvolutionaryTrace" id="P54277"/>
<dbReference type="GeneWiki" id="PMS1"/>
<dbReference type="GenomeRNAi" id="5378"/>
<dbReference type="Pharos" id="P54277">
    <property type="development level" value="Tbio"/>
</dbReference>
<dbReference type="PRO" id="PR:P54277"/>
<dbReference type="Proteomes" id="UP000005640">
    <property type="component" value="Chromosome 2"/>
</dbReference>
<dbReference type="RNAct" id="P54277">
    <property type="molecule type" value="protein"/>
</dbReference>
<dbReference type="Bgee" id="ENSG00000064933">
    <property type="expression patterns" value="Expressed in sperm and 203 other cell types or tissues"/>
</dbReference>
<dbReference type="ExpressionAtlas" id="P54277">
    <property type="expression patterns" value="baseline and differential"/>
</dbReference>
<dbReference type="GO" id="GO:0032389">
    <property type="term" value="C:MutLalpha complex"/>
    <property type="evidence" value="ECO:0000318"/>
    <property type="project" value="GO_Central"/>
</dbReference>
<dbReference type="GO" id="GO:0005634">
    <property type="term" value="C:nucleus"/>
    <property type="evidence" value="ECO:0000314"/>
    <property type="project" value="UniProtKB"/>
</dbReference>
<dbReference type="GO" id="GO:0005524">
    <property type="term" value="F:ATP binding"/>
    <property type="evidence" value="ECO:0007669"/>
    <property type="project" value="InterPro"/>
</dbReference>
<dbReference type="GO" id="GO:0016887">
    <property type="term" value="F:ATP hydrolysis activity"/>
    <property type="evidence" value="ECO:0000318"/>
    <property type="project" value="GO_Central"/>
</dbReference>
<dbReference type="GO" id="GO:0140664">
    <property type="term" value="F:ATP-dependent DNA damage sensor activity"/>
    <property type="evidence" value="ECO:0007669"/>
    <property type="project" value="InterPro"/>
</dbReference>
<dbReference type="GO" id="GO:0003677">
    <property type="term" value="F:DNA binding"/>
    <property type="evidence" value="ECO:0000304"/>
    <property type="project" value="ProtInc"/>
</dbReference>
<dbReference type="GO" id="GO:0019899">
    <property type="term" value="F:enzyme binding"/>
    <property type="evidence" value="ECO:0000353"/>
    <property type="project" value="UniProtKB"/>
</dbReference>
<dbReference type="GO" id="GO:0030983">
    <property type="term" value="F:mismatched DNA binding"/>
    <property type="evidence" value="ECO:0007669"/>
    <property type="project" value="InterPro"/>
</dbReference>
<dbReference type="GO" id="GO:0006298">
    <property type="term" value="P:mismatch repair"/>
    <property type="evidence" value="ECO:0000318"/>
    <property type="project" value="GO_Central"/>
</dbReference>
<dbReference type="GO" id="GO:0009410">
    <property type="term" value="P:response to xenobiotic stimulus"/>
    <property type="evidence" value="ECO:0007669"/>
    <property type="project" value="Ensembl"/>
</dbReference>
<dbReference type="CDD" id="cd16926">
    <property type="entry name" value="HATPase_MutL-MLH-PMS-like"/>
    <property type="match status" value="1"/>
</dbReference>
<dbReference type="CDD" id="cd21985">
    <property type="entry name" value="HMG-box_PMS1"/>
    <property type="match status" value="1"/>
</dbReference>
<dbReference type="CDD" id="cd03485">
    <property type="entry name" value="MutL_Trans_hPMS_1_like"/>
    <property type="match status" value="1"/>
</dbReference>
<dbReference type="FunFam" id="1.10.30.10:FF:000026">
    <property type="entry name" value="PMS1 homolog 1, mismatch repair system component"/>
    <property type="match status" value="1"/>
</dbReference>
<dbReference type="FunFam" id="3.30.230.10:FF:000030">
    <property type="entry name" value="PMS1 homolog 1, mismatch repair system component"/>
    <property type="match status" value="1"/>
</dbReference>
<dbReference type="FunFam" id="3.30.565.10:FF:000017">
    <property type="entry name" value="PMS1 homolog 1, mismatch repair system component"/>
    <property type="match status" value="1"/>
</dbReference>
<dbReference type="Gene3D" id="3.30.230.10">
    <property type="match status" value="1"/>
</dbReference>
<dbReference type="Gene3D" id="1.10.30.10">
    <property type="entry name" value="High mobility group box domain"/>
    <property type="match status" value="1"/>
</dbReference>
<dbReference type="Gene3D" id="3.30.565.10">
    <property type="entry name" value="Histidine kinase-like ATPase, C-terminal domain"/>
    <property type="match status" value="1"/>
</dbReference>
<dbReference type="InterPro" id="IPR014762">
    <property type="entry name" value="DNA_mismatch_repair_CS"/>
</dbReference>
<dbReference type="InterPro" id="IPR013507">
    <property type="entry name" value="DNA_mismatch_S5_2-like"/>
</dbReference>
<dbReference type="InterPro" id="IPR036890">
    <property type="entry name" value="HATPase_C_sf"/>
</dbReference>
<dbReference type="InterPro" id="IPR009071">
    <property type="entry name" value="HMG_box_dom"/>
</dbReference>
<dbReference type="InterPro" id="IPR036910">
    <property type="entry name" value="HMG_box_dom_sf"/>
</dbReference>
<dbReference type="InterPro" id="IPR002099">
    <property type="entry name" value="MutL/Mlh/PMS"/>
</dbReference>
<dbReference type="InterPro" id="IPR038973">
    <property type="entry name" value="MutL/Mlh/Pms-like"/>
</dbReference>
<dbReference type="InterPro" id="IPR020568">
    <property type="entry name" value="Ribosomal_Su5_D2-typ_SF"/>
</dbReference>
<dbReference type="InterPro" id="IPR014721">
    <property type="entry name" value="Ribsml_uS5_D2-typ_fold_subgr"/>
</dbReference>
<dbReference type="NCBIfam" id="TIGR00585">
    <property type="entry name" value="mutl"/>
    <property type="match status" value="1"/>
</dbReference>
<dbReference type="PANTHER" id="PTHR10073">
    <property type="entry name" value="DNA MISMATCH REPAIR PROTEIN MLH, PMS, MUTL"/>
    <property type="match status" value="1"/>
</dbReference>
<dbReference type="PANTHER" id="PTHR10073:SF54">
    <property type="entry name" value="PMS1 PROTEIN HOMOLOG 1"/>
    <property type="match status" value="1"/>
</dbReference>
<dbReference type="Pfam" id="PF01119">
    <property type="entry name" value="DNA_mis_repair"/>
    <property type="match status" value="1"/>
</dbReference>
<dbReference type="Pfam" id="PF13589">
    <property type="entry name" value="HATPase_c_3"/>
    <property type="match status" value="1"/>
</dbReference>
<dbReference type="Pfam" id="PF00505">
    <property type="entry name" value="HMG_box"/>
    <property type="match status" value="1"/>
</dbReference>
<dbReference type="SMART" id="SM01340">
    <property type="entry name" value="DNA_mis_repair"/>
    <property type="match status" value="1"/>
</dbReference>
<dbReference type="SMART" id="SM00398">
    <property type="entry name" value="HMG"/>
    <property type="match status" value="1"/>
</dbReference>
<dbReference type="SUPFAM" id="SSF55874">
    <property type="entry name" value="ATPase domain of HSP90 chaperone/DNA topoisomerase II/histidine kinase"/>
    <property type="match status" value="1"/>
</dbReference>
<dbReference type="SUPFAM" id="SSF47095">
    <property type="entry name" value="HMG-box"/>
    <property type="match status" value="1"/>
</dbReference>
<dbReference type="SUPFAM" id="SSF54211">
    <property type="entry name" value="Ribosomal protein S5 domain 2-like"/>
    <property type="match status" value="1"/>
</dbReference>
<dbReference type="PROSITE" id="PS00058">
    <property type="entry name" value="DNA_MISMATCH_REPAIR_1"/>
    <property type="match status" value="1"/>
</dbReference>
<dbReference type="PROSITE" id="PS50118">
    <property type="entry name" value="HMG_BOX_2"/>
    <property type="match status" value="1"/>
</dbReference>
<comment type="function">
    <text evidence="4">Probably involved in the repair of mismatches in DNA.</text>
</comment>
<comment type="subunit">
    <text evidence="4 5">Component of the DNA mismatch repair (MMR) complex composed at least of MSH2, MSH3, MSH6, PMS1 and MLH1 (PubMed:26300262). The MutL-beta complex is a heterodimer of PMS1 and MLH1 (PubMed:10748105). Interacts with MCM9 (PubMed:26300262).</text>
</comment>
<comment type="interaction">
    <interactant intactId="EBI-2893308">
        <id>P54277</id>
    </interactant>
    <interactant intactId="EBI-744248">
        <id>P40692</id>
        <label>MLH1</label>
    </interactant>
    <organismsDiffer>false</organismsDiffer>
    <experiments>7</experiments>
</comment>
<comment type="interaction">
    <interactant intactId="EBI-12402645">
        <id>P54277-2</id>
    </interactant>
    <interactant intactId="EBI-743027">
        <id>P51808</id>
        <label>DYNLT3</label>
    </interactant>
    <organismsDiffer>false</organismsDiffer>
    <experiments>3</experiments>
</comment>
<comment type="subcellular location">
    <subcellularLocation>
        <location evidence="1">Nucleus</location>
    </subcellularLocation>
</comment>
<comment type="alternative products">
    <event type="alternative splicing"/>
    <isoform>
        <id>P54277-1</id>
        <name>1</name>
        <sequence type="displayed"/>
    </isoform>
    <isoform>
        <id>P54277-2</id>
        <name>2</name>
        <sequence type="described" ref="VSP_042676 VSP_042677"/>
    </isoform>
    <isoform>
        <id>P54277-3</id>
        <name>3</name>
        <sequence type="described" ref="VSP_043371"/>
    </isoform>
    <isoform>
        <id>P54277-4</id>
        <name>4</name>
        <sequence type="described" ref="VSP_047692 VSP_043371 VSP_042676 VSP_042677"/>
    </isoform>
</comment>
<comment type="similarity">
    <text evidence="8">Belongs to the DNA mismatch repair MutL/HexB family.</text>
</comment>
<comment type="online information" name="Atlas of Genetics and Cytogenetics in Oncology and Haematology">
    <link uri="https://atlasgeneticsoncology.org/gene/345/PMS1"/>
</comment>
<proteinExistence type="evidence at protein level"/>
<keyword id="KW-0002">3D-structure</keyword>
<keyword id="KW-0025">Alternative splicing</keyword>
<keyword id="KW-0227">DNA damage</keyword>
<keyword id="KW-0234">DNA repair</keyword>
<keyword id="KW-0238">DNA-binding</keyword>
<keyword id="KW-0362">Hereditary nonpolyposis colorectal cancer</keyword>
<keyword id="KW-0539">Nucleus</keyword>
<keyword id="KW-1267">Proteomics identification</keyword>
<keyword id="KW-1185">Reference proteome</keyword>
<keyword id="KW-0043">Tumor suppressor</keyword>
<feature type="chain" id="PRO_0000178004" description="PMS1 protein homolog 1">
    <location>
        <begin position="1"/>
        <end position="932"/>
    </location>
</feature>
<feature type="DNA-binding region" description="HMG box" evidence="1">
    <location>
        <begin position="571"/>
        <end position="639"/>
    </location>
</feature>
<feature type="region of interest" description="Disordered" evidence="2">
    <location>
        <begin position="465"/>
        <end position="493"/>
    </location>
</feature>
<feature type="splice variant" id="VSP_047692" description="In isoform 4." evidence="7">
    <location>
        <begin position="1"/>
        <end position="176"/>
    </location>
</feature>
<feature type="splice variant" id="VSP_043371" description="In isoform 3 and isoform 4." evidence="7">
    <location>
        <begin position="195"/>
        <end position="233"/>
    </location>
</feature>
<feature type="splice variant" id="VSP_042676" description="In isoform 2 and isoform 4." evidence="7">
    <original>K</original>
    <variation>N</variation>
    <location>
        <position position="619"/>
    </location>
</feature>
<feature type="splice variant" id="VSP_042677" description="In isoform 2 and isoform 4." evidence="7">
    <location>
        <begin position="620"/>
        <end position="781"/>
    </location>
</feature>
<feature type="sequence variant" id="VAR_019166" description="In dbSNP:rs5742973." evidence="6">
    <original>E</original>
    <variation>Q</variation>
    <location>
        <position position="27"/>
    </location>
</feature>
<feature type="sequence variant" id="VAR_014877" description="In dbSNP:rs2066459." evidence="6">
    <original>R</original>
    <variation>K</variation>
    <location>
        <position position="202"/>
    </location>
</feature>
<feature type="sequence variant" id="VAR_012967" description="In dbSNP:rs1145231." evidence="3">
    <original>M</original>
    <variation>T</variation>
    <location>
        <position position="394"/>
    </location>
</feature>
<feature type="sequence variant" id="VAR_012968" description="In dbSNP:rs1145232." evidence="3 6">
    <original>G</original>
    <variation>R</variation>
    <location>
        <position position="501"/>
    </location>
</feature>
<feature type="sequence variant" id="VAR_014878" description="In dbSNP:rs2066456." evidence="6">
    <original>N</original>
    <variation>S</variation>
    <location>
        <position position="632"/>
    </location>
</feature>
<feature type="sequence variant" id="VAR_014879" description="In dbSNP:rs2066455." evidence="6">
    <original>E</original>
    <variation>D</variation>
    <location>
        <position position="720"/>
    </location>
</feature>
<feature type="sequence variant" id="VAR_014880" description="In dbSNP:rs1145234." evidence="6">
    <original>Y</original>
    <variation>H</variation>
    <location>
        <position position="793"/>
    </location>
</feature>
<feature type="helix" evidence="9">
    <location>
        <begin position="577"/>
        <end position="592"/>
    </location>
</feature>
<feature type="helix" evidence="9">
    <location>
        <begin position="598"/>
        <end position="610"/>
    </location>
</feature>
<feature type="helix" evidence="9">
    <location>
        <begin position="614"/>
        <end position="625"/>
    </location>
</feature>
<feature type="turn" evidence="9">
    <location>
        <begin position="626"/>
        <end position="628"/>
    </location>
</feature>
<feature type="helix" evidence="9">
    <location>
        <begin position="629"/>
        <end position="638"/>
    </location>
</feature>
<organism>
    <name type="scientific">Homo sapiens</name>
    <name type="common">Human</name>
    <dbReference type="NCBI Taxonomy" id="9606"/>
    <lineage>
        <taxon>Eukaryota</taxon>
        <taxon>Metazoa</taxon>
        <taxon>Chordata</taxon>
        <taxon>Craniata</taxon>
        <taxon>Vertebrata</taxon>
        <taxon>Euteleostomi</taxon>
        <taxon>Mammalia</taxon>
        <taxon>Eutheria</taxon>
        <taxon>Euarchontoglires</taxon>
        <taxon>Primates</taxon>
        <taxon>Haplorrhini</taxon>
        <taxon>Catarrhini</taxon>
        <taxon>Hominidae</taxon>
        <taxon>Homo</taxon>
    </lineage>
</organism>
<evidence type="ECO:0000255" key="1">
    <source>
        <dbReference type="PROSITE-ProRule" id="PRU00267"/>
    </source>
</evidence>
<evidence type="ECO:0000256" key="2">
    <source>
        <dbReference type="SAM" id="MobiDB-lite"/>
    </source>
</evidence>
<evidence type="ECO:0000269" key="3">
    <source>
    </source>
</evidence>
<evidence type="ECO:0000269" key="4">
    <source>
    </source>
</evidence>
<evidence type="ECO:0000269" key="5">
    <source>
    </source>
</evidence>
<evidence type="ECO:0000269" key="6">
    <source ref="3"/>
</evidence>
<evidence type="ECO:0000303" key="7">
    <source ref="2"/>
</evidence>
<evidence type="ECO:0000305" key="8"/>
<evidence type="ECO:0007829" key="9">
    <source>
        <dbReference type="PDB" id="2CS1"/>
    </source>
</evidence>
<accession>P54277</accession>
<accession>D3DPI1</accession>
<accession>Q4VAL4</accession>
<accession>Q5FBZ3</accession>
<accession>Q5FBZ6</accession>
<accession>Q5FBZ8</accession>
<reference key="1">
    <citation type="journal article" date="1994" name="Nature">
        <title>Mutations of two PMS homologues in hereditary nonpolyposis colon cancer.</title>
        <authorList>
            <person name="Nicolaides N.C."/>
            <person name="Papadopoulos N."/>
            <person name="Liu B."/>
            <person name="Wei Y.-F."/>
            <person name="Carter K.C."/>
            <person name="Ruben S.M."/>
            <person name="Rosen C.A."/>
            <person name="Haseltine W.H."/>
            <person name="Fleischmann R.D."/>
            <person name="Fraser C.M."/>
            <person name="Adams M.D."/>
            <person name="Venter J.C."/>
            <person name="Dunlop M.G."/>
            <person name="Hamilton S.R."/>
            <person name="Petersen G.M."/>
            <person name="de la Chapelle A."/>
            <person name="Vogelstein B."/>
            <person name="Kinzler K.W."/>
        </authorList>
    </citation>
    <scope>NUCLEOTIDE SEQUENCE [GENOMIC DNA]</scope>
    <source>
        <tissue>Gall bladder</tissue>
    </source>
</reference>
<reference key="2">
    <citation type="submission" date="2003-02" db="EMBL/GenBank/DDBJ databases">
        <title>PMS1 mRNA, nirs splice variants.</title>
        <authorList>
            <person name="Hayashi A."/>
            <person name="Sameshima E."/>
            <person name="Tabata Y."/>
            <person name="Iida K."/>
            <person name="Mitsuyama M."/>
            <person name="Kanai S."/>
            <person name="Furuya T."/>
            <person name="Saito T."/>
        </authorList>
    </citation>
    <scope>NUCLEOTIDE SEQUENCE [MRNA] (ISOFORMS 2; 3 AND 4)</scope>
</reference>
<reference key="3">
    <citation type="submission" date="2003-04" db="EMBL/GenBank/DDBJ databases">
        <authorList>
            <consortium name="NIEHS SNPs program"/>
        </authorList>
    </citation>
    <scope>NUCLEOTIDE SEQUENCE [GENOMIC DNA]</scope>
    <scope>VARIANTS GLN-27; LYS-202; ARG-501; SER-632; ASP-720 AND HIS-793</scope>
</reference>
<reference key="4">
    <citation type="journal article" date="2005" name="Nature">
        <title>Generation and annotation of the DNA sequences of human chromosomes 2 and 4.</title>
        <authorList>
            <person name="Hillier L.W."/>
            <person name="Graves T.A."/>
            <person name="Fulton R.S."/>
            <person name="Fulton L.A."/>
            <person name="Pepin K.H."/>
            <person name="Minx P."/>
            <person name="Wagner-McPherson C."/>
            <person name="Layman D."/>
            <person name="Wylie K."/>
            <person name="Sekhon M."/>
            <person name="Becker M.C."/>
            <person name="Fewell G.A."/>
            <person name="Delehaunty K.D."/>
            <person name="Miner T.L."/>
            <person name="Nash W.E."/>
            <person name="Kremitzki C."/>
            <person name="Oddy L."/>
            <person name="Du H."/>
            <person name="Sun H."/>
            <person name="Bradshaw-Cordum H."/>
            <person name="Ali J."/>
            <person name="Carter J."/>
            <person name="Cordes M."/>
            <person name="Harris A."/>
            <person name="Isak A."/>
            <person name="van Brunt A."/>
            <person name="Nguyen C."/>
            <person name="Du F."/>
            <person name="Courtney L."/>
            <person name="Kalicki J."/>
            <person name="Ozersky P."/>
            <person name="Abbott S."/>
            <person name="Armstrong J."/>
            <person name="Belter E.A."/>
            <person name="Caruso L."/>
            <person name="Cedroni M."/>
            <person name="Cotton M."/>
            <person name="Davidson T."/>
            <person name="Desai A."/>
            <person name="Elliott G."/>
            <person name="Erb T."/>
            <person name="Fronick C."/>
            <person name="Gaige T."/>
            <person name="Haakenson W."/>
            <person name="Haglund K."/>
            <person name="Holmes A."/>
            <person name="Harkins R."/>
            <person name="Kim K."/>
            <person name="Kruchowski S.S."/>
            <person name="Strong C.M."/>
            <person name="Grewal N."/>
            <person name="Goyea E."/>
            <person name="Hou S."/>
            <person name="Levy A."/>
            <person name="Martinka S."/>
            <person name="Mead K."/>
            <person name="McLellan M.D."/>
            <person name="Meyer R."/>
            <person name="Randall-Maher J."/>
            <person name="Tomlinson C."/>
            <person name="Dauphin-Kohlberg S."/>
            <person name="Kozlowicz-Reilly A."/>
            <person name="Shah N."/>
            <person name="Swearengen-Shahid S."/>
            <person name="Snider J."/>
            <person name="Strong J.T."/>
            <person name="Thompson J."/>
            <person name="Yoakum M."/>
            <person name="Leonard S."/>
            <person name="Pearman C."/>
            <person name="Trani L."/>
            <person name="Radionenko M."/>
            <person name="Waligorski J.E."/>
            <person name="Wang C."/>
            <person name="Rock S.M."/>
            <person name="Tin-Wollam A.-M."/>
            <person name="Maupin R."/>
            <person name="Latreille P."/>
            <person name="Wendl M.C."/>
            <person name="Yang S.-P."/>
            <person name="Pohl C."/>
            <person name="Wallis J.W."/>
            <person name="Spieth J."/>
            <person name="Bieri T.A."/>
            <person name="Berkowicz N."/>
            <person name="Nelson J.O."/>
            <person name="Osborne J."/>
            <person name="Ding L."/>
            <person name="Meyer R."/>
            <person name="Sabo A."/>
            <person name="Shotland Y."/>
            <person name="Sinha P."/>
            <person name="Wohldmann P.E."/>
            <person name="Cook L.L."/>
            <person name="Hickenbotham M.T."/>
            <person name="Eldred J."/>
            <person name="Williams D."/>
            <person name="Jones T.A."/>
            <person name="She X."/>
            <person name="Ciccarelli F.D."/>
            <person name="Izaurralde E."/>
            <person name="Taylor J."/>
            <person name="Schmutz J."/>
            <person name="Myers R.M."/>
            <person name="Cox D.R."/>
            <person name="Huang X."/>
            <person name="McPherson J.D."/>
            <person name="Mardis E.R."/>
            <person name="Clifton S.W."/>
            <person name="Warren W.C."/>
            <person name="Chinwalla A.T."/>
            <person name="Eddy S.R."/>
            <person name="Marra M.A."/>
            <person name="Ovcharenko I."/>
            <person name="Furey T.S."/>
            <person name="Miller W."/>
            <person name="Eichler E.E."/>
            <person name="Bork P."/>
            <person name="Suyama M."/>
            <person name="Torrents D."/>
            <person name="Waterston R.H."/>
            <person name="Wilson R.K."/>
        </authorList>
    </citation>
    <scope>NUCLEOTIDE SEQUENCE [LARGE SCALE GENOMIC DNA]</scope>
</reference>
<reference key="5">
    <citation type="submission" date="2005-09" db="EMBL/GenBank/DDBJ databases">
        <authorList>
            <person name="Mural R.J."/>
            <person name="Istrail S."/>
            <person name="Sutton G.G."/>
            <person name="Florea L."/>
            <person name="Halpern A.L."/>
            <person name="Mobarry C.M."/>
            <person name="Lippert R."/>
            <person name="Walenz B."/>
            <person name="Shatkay H."/>
            <person name="Dew I."/>
            <person name="Miller J.R."/>
            <person name="Flanigan M.J."/>
            <person name="Edwards N.J."/>
            <person name="Bolanos R."/>
            <person name="Fasulo D."/>
            <person name="Halldorsson B.V."/>
            <person name="Hannenhalli S."/>
            <person name="Turner R."/>
            <person name="Yooseph S."/>
            <person name="Lu F."/>
            <person name="Nusskern D.R."/>
            <person name="Shue B.C."/>
            <person name="Zheng X.H."/>
            <person name="Zhong F."/>
            <person name="Delcher A.L."/>
            <person name="Huson D.H."/>
            <person name="Kravitz S.A."/>
            <person name="Mouchard L."/>
            <person name="Reinert K."/>
            <person name="Remington K.A."/>
            <person name="Clark A.G."/>
            <person name="Waterman M.S."/>
            <person name="Eichler E.E."/>
            <person name="Adams M.D."/>
            <person name="Hunkapiller M.W."/>
            <person name="Myers E.W."/>
            <person name="Venter J.C."/>
        </authorList>
    </citation>
    <scope>NUCLEOTIDE SEQUENCE [LARGE SCALE GENOMIC DNA]</scope>
</reference>
<reference key="6">
    <citation type="journal article" date="2004" name="Genome Res.">
        <title>The status, quality, and expansion of the NIH full-length cDNA project: the Mammalian Gene Collection (MGC).</title>
        <authorList>
            <consortium name="The MGC Project Team"/>
        </authorList>
    </citation>
    <scope>NUCLEOTIDE SEQUENCE [LARGE SCALE MRNA] OF 1-920 (ISOFORM 1)</scope>
</reference>
<reference key="7">
    <citation type="journal article" date="2000" name="J. Biol. Chem.">
        <title>Identification of a second MutL DNA mismatch repair complex (hPMS1 and hMLH1) in human epithelial cells.</title>
        <authorList>
            <person name="Leung W.K."/>
            <person name="Kim J.J."/>
            <person name="Wu L."/>
            <person name="Sepulveda J.L."/>
            <person name="Sepulveda A.R."/>
        </authorList>
    </citation>
    <scope>FUNCTION</scope>
    <scope>SUBUNIT</scope>
    <scope>INTERACTION WITH MLH1</scope>
</reference>
<reference key="8">
    <citation type="journal article" date="2011" name="BMC Syst. Biol.">
        <title>Initial characterization of the human central proteome.</title>
        <authorList>
            <person name="Burkard T.R."/>
            <person name="Planyavsky M."/>
            <person name="Kaupe I."/>
            <person name="Breitwieser F.P."/>
            <person name="Buerckstuemmer T."/>
            <person name="Bennett K.L."/>
            <person name="Superti-Furga G."/>
            <person name="Colinge J."/>
        </authorList>
    </citation>
    <scope>IDENTIFICATION BY MASS SPECTROMETRY [LARGE SCALE ANALYSIS]</scope>
</reference>
<reference key="9">
    <citation type="journal article" date="2012" name="Proc. Natl. Acad. Sci. U.S.A.">
        <title>N-terminal acetylome analyses and functional insights of the N-terminal acetyltransferase NatB.</title>
        <authorList>
            <person name="Van Damme P."/>
            <person name="Lasa M."/>
            <person name="Polevoda B."/>
            <person name="Gazquez C."/>
            <person name="Elosegui-Artola A."/>
            <person name="Kim D.S."/>
            <person name="De Juan-Pardo E."/>
            <person name="Demeyer K."/>
            <person name="Hole K."/>
            <person name="Larrea E."/>
            <person name="Timmerman E."/>
            <person name="Prieto J."/>
            <person name="Arnesen T."/>
            <person name="Sherman F."/>
            <person name="Gevaert K."/>
            <person name="Aldabe R."/>
        </authorList>
    </citation>
    <scope>IDENTIFICATION BY MASS SPECTROMETRY [LARGE SCALE ANALYSIS]</scope>
</reference>
<reference key="10">
    <citation type="journal article" date="2015" name="Mol. Cell">
        <title>MCM9 Is Required for Mammalian DNA Mismatch Repair.</title>
        <authorList>
            <person name="Traver S."/>
            <person name="Coulombe P."/>
            <person name="Peiffer I."/>
            <person name="Hutchins J.R."/>
            <person name="Kitzmann M."/>
            <person name="Latreille D."/>
            <person name="Mechali M."/>
        </authorList>
    </citation>
    <scope>IDENTIFICATION IN THE MMR COMPLEX</scope>
    <scope>INTERACTION WITH MCM9</scope>
</reference>
<reference key="11">
    <citation type="submission" date="2005-11" db="PDB data bank">
        <title>Solution structure of the HMG domain of human DNA mismatch repair protein.</title>
        <authorList>
            <consortium name="RIKEN structural genomics initiative (RSGI)"/>
        </authorList>
    </citation>
    <scope>STRUCTURE BY NMR OF 571-649</scope>
</reference>
<reference key="12">
    <citation type="journal article" date="1999" name="Hum. Genet.">
        <title>Prevalence of germline mutations of hMLH1, hMSH2, hPMS1, hPMS2, and hMSH6 genes in 75 French kindreds with nonpolyposis colorectal cancer.</title>
        <authorList>
            <person name="Wang Q."/>
            <person name="Lasset C."/>
            <person name="Desseigne F."/>
            <person name="Saurin J.-C."/>
            <person name="Maugard C."/>
            <person name="Navarro C."/>
            <person name="Ruano E."/>
            <person name="Descos L."/>
            <person name="Trillet-Lenoir V."/>
            <person name="Bosset J.-F."/>
            <person name="Puisieux A."/>
        </authorList>
    </citation>
    <scope>VARIANTS THR-394 AND ARG-501</scope>
</reference>
<sequence>MKQLPAATVRLLSSSQIITSVVSVVKELIENSLDAGATSVDVKLENYGFDKIEVRDNGEGIKAVDAPVMAMKYYTSKINSHEDLENLTTYGFRGEALGSICCIAEVLITTRTAADNFSTQYVLDGSGHILSQKPSHLGQGTTVTALRLFKNLPVRKQFYSTAKKCKDEIKKIQDLLMSFGILKPDLRIVFVHNKAVIWQKSRVSDHKMALMSVLGTAVMNNMESFQYHSEESQIYLSGFLPKCDADHSFTSLSTPERSFIFINSRPVHQKDILKLIRHHYNLKCLKESTRLYPVFFLKIDVPTADVDVNLTPDKSQVLLQNKESVLIALENLMTTCYGPLPSTNSYENNKTDVSAADIVLSKTAETDVLFNKVESSGKNYSNVDTSVIPFQNDMHNDESGKNTDDCLNHQISIGDFGYGHCSSEISNIDKNTKNAFQDISMSNVSWENSQTEYSKTCFISSVKHTQSENGNKDHIDESGENEEEAGLENSSEISADEWSRGNILKNSVGENIEPVKILVPEKSLPCKVSNNNYPIPEQMNLNEDSCNKKSNVIDNKSGKVTAYDLLSNRVIKKPMSASALFVQDHRPQFLIENPKTSLEDATLQIEELWKTLSEEEKLKYEEKATKDLERYNSQMKRAIEQESQMSLKDGRKKIKPTSAWNLAQKHKLKTSLSNQPKLDELLQSQIEKRRSQNIKMVQIPFSMKNLKINFKKQNKVDLEEKDEPCLIHNLRFPDAWLMTSKTEVMLLNPYRVEEALLFKRLLENHKLPAEPLEKPIMLTESLFNGSHYLDVLYKMTADDQRYSGSTYLSDPRLTANGFKIKLIPGVSITENYLEIEGMANCLPFYGVADLKEILNAILNRNAKEVYECRPRKVISYLEGEAVRLSRQLPMYLSKEDIQDIIYRMKHQFGNEIKECVHGRPFFHHLTYLPETT</sequence>
<protein>
    <recommendedName>
        <fullName>PMS1 protein homolog 1</fullName>
    </recommendedName>
    <alternativeName>
        <fullName>DNA mismatch repair protein PMS1</fullName>
    </alternativeName>
</protein>